<comment type="function">
    <text evidence="1">General inhibitor of pancreatic serine proteases: inhibits chymotrypsin, trypsin, elastases, factor X, kallikrein as well as a variety of other proteases.</text>
</comment>
<comment type="subunit">
    <text evidence="1">Homodimer.</text>
</comment>
<comment type="subcellular location">
    <subcellularLocation>
        <location evidence="1">Periplasm</location>
    </subcellularLocation>
</comment>
<comment type="similarity">
    <text evidence="1">Belongs to the protease inhibitor I11 (ecotin) family.</text>
</comment>
<feature type="signal peptide" evidence="1">
    <location>
        <begin position="1"/>
        <end position="20"/>
    </location>
</feature>
<feature type="chain" id="PRO_0000291616" description="Ecotin">
    <location>
        <begin position="21"/>
        <end position="162"/>
    </location>
</feature>
<feature type="site" description="Reactive bond" evidence="1">
    <location>
        <begin position="104"/>
        <end position="105"/>
    </location>
</feature>
<feature type="disulfide bond" evidence="1">
    <location>
        <begin position="70"/>
        <end position="107"/>
    </location>
</feature>
<proteinExistence type="inferred from homology"/>
<evidence type="ECO:0000255" key="1">
    <source>
        <dbReference type="HAMAP-Rule" id="MF_00706"/>
    </source>
</evidence>
<organism>
    <name type="scientific">Escherichia coli O6:K15:H31 (strain 536 / UPEC)</name>
    <dbReference type="NCBI Taxonomy" id="362663"/>
    <lineage>
        <taxon>Bacteria</taxon>
        <taxon>Pseudomonadati</taxon>
        <taxon>Pseudomonadota</taxon>
        <taxon>Gammaproteobacteria</taxon>
        <taxon>Enterobacterales</taxon>
        <taxon>Enterobacteriaceae</taxon>
        <taxon>Escherichia</taxon>
    </lineage>
</organism>
<sequence>MKTILPAVLFAAFATTSAWAAESVQPLEKIAPYPQAEKGMKRQVIQLTPQEDESTLKVELLIGQTLEVDCNLHRLGGKLESKTLEGWGYDYYVFDKVSSPVSTMMACPDGKKEKKFVTAYLGDAGMLRYNSKLPIVVYTPDNVDVKYRVWKAEEKIDNAVVR</sequence>
<keyword id="KW-1015">Disulfide bond</keyword>
<keyword id="KW-0574">Periplasm</keyword>
<keyword id="KW-0646">Protease inhibitor</keyword>
<keyword id="KW-0722">Serine protease inhibitor</keyword>
<keyword id="KW-0732">Signal</keyword>
<reference key="1">
    <citation type="journal article" date="2006" name="Mol. Microbiol.">
        <title>Role of pathogenicity island-associated integrases in the genome plasticity of uropathogenic Escherichia coli strain 536.</title>
        <authorList>
            <person name="Hochhut B."/>
            <person name="Wilde C."/>
            <person name="Balling G."/>
            <person name="Middendorf B."/>
            <person name="Dobrindt U."/>
            <person name="Brzuszkiewicz E."/>
            <person name="Gottschalk G."/>
            <person name="Carniel E."/>
            <person name="Hacker J."/>
        </authorList>
    </citation>
    <scope>NUCLEOTIDE SEQUENCE [LARGE SCALE GENOMIC DNA]</scope>
    <source>
        <strain>536 / UPEC</strain>
    </source>
</reference>
<accession>Q0TFN2</accession>
<gene>
    <name evidence="1" type="primary">eco</name>
    <name type="ordered locus">ECP_2251</name>
</gene>
<dbReference type="EMBL" id="CP000247">
    <property type="protein sequence ID" value="ABG70247.1"/>
    <property type="molecule type" value="Genomic_DNA"/>
</dbReference>
<dbReference type="SMR" id="Q0TFN2"/>
<dbReference type="MEROPS" id="I11.001"/>
<dbReference type="KEGG" id="ecp:ECP_2251"/>
<dbReference type="HOGENOM" id="CLU_111565_0_0_6"/>
<dbReference type="Proteomes" id="UP000009182">
    <property type="component" value="Chromosome"/>
</dbReference>
<dbReference type="GO" id="GO:0042597">
    <property type="term" value="C:periplasmic space"/>
    <property type="evidence" value="ECO:0007669"/>
    <property type="project" value="UniProtKB-SubCell"/>
</dbReference>
<dbReference type="GO" id="GO:0004867">
    <property type="term" value="F:serine-type endopeptidase inhibitor activity"/>
    <property type="evidence" value="ECO:0007669"/>
    <property type="project" value="UniProtKB-UniRule"/>
</dbReference>
<dbReference type="CDD" id="cd00242">
    <property type="entry name" value="Ecotin"/>
    <property type="match status" value="1"/>
</dbReference>
<dbReference type="FunFam" id="2.60.40.550:FF:000001">
    <property type="entry name" value="Ecotin"/>
    <property type="match status" value="1"/>
</dbReference>
<dbReference type="FunFam" id="4.10.1230.10:FF:000001">
    <property type="entry name" value="Ecotin"/>
    <property type="match status" value="1"/>
</dbReference>
<dbReference type="Gene3D" id="2.60.40.550">
    <property type="entry name" value="Ecotin"/>
    <property type="match status" value="1"/>
</dbReference>
<dbReference type="Gene3D" id="4.10.1230.10">
    <property type="entry name" value="Ecotin, trypsin inhibitor"/>
    <property type="match status" value="1"/>
</dbReference>
<dbReference type="HAMAP" id="MF_00706">
    <property type="entry name" value="Ecotin"/>
    <property type="match status" value="1"/>
</dbReference>
<dbReference type="InterPro" id="IPR027438">
    <property type="entry name" value="Ecotin_C"/>
</dbReference>
<dbReference type="InterPro" id="IPR036198">
    <property type="entry name" value="Ecotin_sf"/>
</dbReference>
<dbReference type="InterPro" id="IPR005658">
    <property type="entry name" value="Prot_inh_ecotin"/>
</dbReference>
<dbReference type="InterPro" id="IPR023084">
    <property type="entry name" value="Prot_inh_ecotin_gammaproteobac"/>
</dbReference>
<dbReference type="NCBIfam" id="NF002987">
    <property type="entry name" value="PRK03719.1"/>
    <property type="match status" value="1"/>
</dbReference>
<dbReference type="PANTHER" id="PTHR35890">
    <property type="match status" value="1"/>
</dbReference>
<dbReference type="PANTHER" id="PTHR35890:SF3">
    <property type="entry name" value="ECOTIN"/>
    <property type="match status" value="1"/>
</dbReference>
<dbReference type="Pfam" id="PF03974">
    <property type="entry name" value="Ecotin"/>
    <property type="match status" value="1"/>
</dbReference>
<dbReference type="PIRSF" id="PIRSF006865">
    <property type="entry name" value="Prot_inh_ecotin"/>
    <property type="match status" value="1"/>
</dbReference>
<dbReference type="SUPFAM" id="SSF49772">
    <property type="entry name" value="Ecotin, trypsin inhibitor"/>
    <property type="match status" value="1"/>
</dbReference>
<protein>
    <recommendedName>
        <fullName evidence="1">Ecotin</fullName>
    </recommendedName>
</protein>
<name>ECOT_ECOL5</name>